<protein>
    <recommendedName>
        <fullName evidence="1">Protease HtpX homolog</fullName>
        <ecNumber evidence="1">3.4.24.-</ecNumber>
    </recommendedName>
</protein>
<accession>A0PLW0</accession>
<keyword id="KW-1003">Cell membrane</keyword>
<keyword id="KW-0378">Hydrolase</keyword>
<keyword id="KW-0472">Membrane</keyword>
<keyword id="KW-0479">Metal-binding</keyword>
<keyword id="KW-0482">Metalloprotease</keyword>
<keyword id="KW-0645">Protease</keyword>
<keyword id="KW-0812">Transmembrane</keyword>
<keyword id="KW-1133">Transmembrane helix</keyword>
<keyword id="KW-0862">Zinc</keyword>
<name>HTPX_MYCUA</name>
<reference key="1">
    <citation type="journal article" date="2007" name="Genome Res.">
        <title>Reductive evolution and niche adaptation inferred from the genome of Mycobacterium ulcerans, the causative agent of Buruli ulcer.</title>
        <authorList>
            <person name="Stinear T.P."/>
            <person name="Seemann T."/>
            <person name="Pidot S."/>
            <person name="Frigui W."/>
            <person name="Reysset G."/>
            <person name="Garnier T."/>
            <person name="Meurice G."/>
            <person name="Simon D."/>
            <person name="Bouchier C."/>
            <person name="Ma L."/>
            <person name="Tichit M."/>
            <person name="Porter J.L."/>
            <person name="Ryan J."/>
            <person name="Johnson P.D.R."/>
            <person name="Davies J.K."/>
            <person name="Jenkin G.A."/>
            <person name="Small P.L.C."/>
            <person name="Jones L.M."/>
            <person name="Tekaia F."/>
            <person name="Laval F."/>
            <person name="Daffe M."/>
            <person name="Parkhill J."/>
            <person name="Cole S.T."/>
        </authorList>
    </citation>
    <scope>NUCLEOTIDE SEQUENCE [LARGE SCALE GENOMIC DNA]</scope>
    <source>
        <strain>Agy99</strain>
    </source>
</reference>
<feature type="chain" id="PRO_1000020894" description="Protease HtpX homolog">
    <location>
        <begin position="1"/>
        <end position="286"/>
    </location>
</feature>
<feature type="transmembrane region" description="Helical" evidence="1">
    <location>
        <begin position="13"/>
        <end position="30"/>
    </location>
</feature>
<feature type="transmembrane region" description="Helical" evidence="1">
    <location>
        <begin position="34"/>
        <end position="51"/>
    </location>
</feature>
<feature type="transmembrane region" description="Helical" evidence="1">
    <location>
        <begin position="145"/>
        <end position="165"/>
    </location>
</feature>
<feature type="transmembrane region" description="Helical" evidence="1">
    <location>
        <begin position="181"/>
        <end position="201"/>
    </location>
</feature>
<feature type="active site" evidence="1">
    <location>
        <position position="136"/>
    </location>
</feature>
<feature type="binding site" evidence="1">
    <location>
        <position position="135"/>
    </location>
    <ligand>
        <name>Zn(2+)</name>
        <dbReference type="ChEBI" id="CHEBI:29105"/>
        <note>catalytic</note>
    </ligand>
</feature>
<feature type="binding site" evidence="1">
    <location>
        <position position="139"/>
    </location>
    <ligand>
        <name>Zn(2+)</name>
        <dbReference type="ChEBI" id="CHEBI:29105"/>
        <note>catalytic</note>
    </ligand>
</feature>
<feature type="binding site" evidence="1">
    <location>
        <position position="206"/>
    </location>
    <ligand>
        <name>Zn(2+)</name>
        <dbReference type="ChEBI" id="CHEBI:29105"/>
        <note>catalytic</note>
    </ligand>
</feature>
<gene>
    <name evidence="1" type="primary">htpX</name>
    <name type="ordered locus">MUL_0665</name>
</gene>
<evidence type="ECO:0000255" key="1">
    <source>
        <dbReference type="HAMAP-Rule" id="MF_00188"/>
    </source>
</evidence>
<organism>
    <name type="scientific">Mycobacterium ulcerans (strain Agy99)</name>
    <dbReference type="NCBI Taxonomy" id="362242"/>
    <lineage>
        <taxon>Bacteria</taxon>
        <taxon>Bacillati</taxon>
        <taxon>Actinomycetota</taxon>
        <taxon>Actinomycetes</taxon>
        <taxon>Mycobacteriales</taxon>
        <taxon>Mycobacteriaceae</taxon>
        <taxon>Mycobacterium</taxon>
        <taxon>Mycobacterium ulcerans group</taxon>
    </lineage>
</organism>
<proteinExistence type="inferred from homology"/>
<sequence>MTWHPHANRLKTFLLLVGMSAMIVFFGALFGRTALILAVLFAVGMNVYVYFNSDKLALRAMHAQPVSELQAPAMYRIVRELAASAHQPMPRLYISDTAAPNAFATGRNPRNAAVCCTTGILALLNERELRAVLGHELSHVYNRDILISCIAGALASVITALANMAMWAGMFGGKRDGQNPFALLLVSLLGPIAATVVRMAVSRSREYQADESGAVLTGDPLALASALRKISGGVQLAPLPPEPQLASQAHLMIANPFRAGERIGSLFSTHPPIEDRIRRLEQMARG</sequence>
<comment type="cofactor">
    <cofactor evidence="1">
        <name>Zn(2+)</name>
        <dbReference type="ChEBI" id="CHEBI:29105"/>
    </cofactor>
    <text evidence="1">Binds 1 zinc ion per subunit.</text>
</comment>
<comment type="subcellular location">
    <subcellularLocation>
        <location evidence="1">Cell membrane</location>
        <topology evidence="1">Multi-pass membrane protein</topology>
    </subcellularLocation>
</comment>
<comment type="similarity">
    <text evidence="1">Belongs to the peptidase M48B family.</text>
</comment>
<dbReference type="EC" id="3.4.24.-" evidence="1"/>
<dbReference type="EMBL" id="CP000325">
    <property type="protein sequence ID" value="ABL03329.1"/>
    <property type="molecule type" value="Genomic_DNA"/>
</dbReference>
<dbReference type="RefSeq" id="WP_011738954.1">
    <property type="nucleotide sequence ID" value="NC_008611.1"/>
</dbReference>
<dbReference type="KEGG" id="mul:MUL_0665"/>
<dbReference type="eggNOG" id="COG0501">
    <property type="taxonomic scope" value="Bacteria"/>
</dbReference>
<dbReference type="HOGENOM" id="CLU_042266_3_1_11"/>
<dbReference type="Proteomes" id="UP000000765">
    <property type="component" value="Chromosome"/>
</dbReference>
<dbReference type="GO" id="GO:0005886">
    <property type="term" value="C:plasma membrane"/>
    <property type="evidence" value="ECO:0007669"/>
    <property type="project" value="UniProtKB-SubCell"/>
</dbReference>
<dbReference type="GO" id="GO:0004222">
    <property type="term" value="F:metalloendopeptidase activity"/>
    <property type="evidence" value="ECO:0007669"/>
    <property type="project" value="UniProtKB-UniRule"/>
</dbReference>
<dbReference type="GO" id="GO:0008270">
    <property type="term" value="F:zinc ion binding"/>
    <property type="evidence" value="ECO:0007669"/>
    <property type="project" value="UniProtKB-UniRule"/>
</dbReference>
<dbReference type="GO" id="GO:0006508">
    <property type="term" value="P:proteolysis"/>
    <property type="evidence" value="ECO:0007669"/>
    <property type="project" value="UniProtKB-KW"/>
</dbReference>
<dbReference type="CDD" id="cd07336">
    <property type="entry name" value="M48B_HtpX_like"/>
    <property type="match status" value="1"/>
</dbReference>
<dbReference type="FunFam" id="3.30.2010.10:FF:000008">
    <property type="entry name" value="Protease HtpX homolog"/>
    <property type="match status" value="1"/>
</dbReference>
<dbReference type="Gene3D" id="3.30.2010.10">
    <property type="entry name" value="Metalloproteases ('zincins'), catalytic domain"/>
    <property type="match status" value="1"/>
</dbReference>
<dbReference type="HAMAP" id="MF_00188">
    <property type="entry name" value="Pept_M48_protease_HtpX"/>
    <property type="match status" value="1"/>
</dbReference>
<dbReference type="InterPro" id="IPR050083">
    <property type="entry name" value="HtpX_protease"/>
</dbReference>
<dbReference type="InterPro" id="IPR022919">
    <property type="entry name" value="Pept_M48_protease_HtpX"/>
</dbReference>
<dbReference type="InterPro" id="IPR001915">
    <property type="entry name" value="Peptidase_M48"/>
</dbReference>
<dbReference type="NCBIfam" id="NF002839">
    <property type="entry name" value="PRK03072.1"/>
    <property type="match status" value="1"/>
</dbReference>
<dbReference type="PANTHER" id="PTHR43221">
    <property type="entry name" value="PROTEASE HTPX"/>
    <property type="match status" value="1"/>
</dbReference>
<dbReference type="PANTHER" id="PTHR43221:SF1">
    <property type="entry name" value="PROTEASE HTPX"/>
    <property type="match status" value="1"/>
</dbReference>
<dbReference type="Pfam" id="PF01435">
    <property type="entry name" value="Peptidase_M48"/>
    <property type="match status" value="1"/>
</dbReference>
<dbReference type="PROSITE" id="PS00142">
    <property type="entry name" value="ZINC_PROTEASE"/>
    <property type="match status" value="1"/>
</dbReference>